<dbReference type="EC" id="1.11.1.7"/>
<dbReference type="PIR" id="A91094">
    <property type="entry name" value="OPNB7"/>
</dbReference>
<dbReference type="SMR" id="P00434"/>
<dbReference type="PeroxiBase" id="154">
    <property type="entry name" value="BrPrx52-1Aa_other"/>
</dbReference>
<dbReference type="GO" id="GO:0020037">
    <property type="term" value="F:heme binding"/>
    <property type="evidence" value="ECO:0007669"/>
    <property type="project" value="InterPro"/>
</dbReference>
<dbReference type="GO" id="GO:0140825">
    <property type="term" value="F:lactoperoxidase activity"/>
    <property type="evidence" value="ECO:0007669"/>
    <property type="project" value="UniProtKB-EC"/>
</dbReference>
<dbReference type="GO" id="GO:0046872">
    <property type="term" value="F:metal ion binding"/>
    <property type="evidence" value="ECO:0007669"/>
    <property type="project" value="UniProtKB-KW"/>
</dbReference>
<dbReference type="GO" id="GO:0042744">
    <property type="term" value="P:hydrogen peroxide catabolic process"/>
    <property type="evidence" value="ECO:0007669"/>
    <property type="project" value="UniProtKB-KW"/>
</dbReference>
<dbReference type="GO" id="GO:0006979">
    <property type="term" value="P:response to oxidative stress"/>
    <property type="evidence" value="ECO:0007669"/>
    <property type="project" value="InterPro"/>
</dbReference>
<dbReference type="CDD" id="cd00693">
    <property type="entry name" value="secretory_peroxidase"/>
    <property type="match status" value="1"/>
</dbReference>
<dbReference type="FunFam" id="1.10.420.10:FF:000006">
    <property type="entry name" value="Peroxidase"/>
    <property type="match status" value="1"/>
</dbReference>
<dbReference type="FunFam" id="1.10.520.10:FF:000001">
    <property type="entry name" value="Peroxidase"/>
    <property type="match status" value="1"/>
</dbReference>
<dbReference type="Gene3D" id="1.10.520.10">
    <property type="match status" value="1"/>
</dbReference>
<dbReference type="Gene3D" id="1.10.420.10">
    <property type="entry name" value="Peroxidase, domain 2"/>
    <property type="match status" value="1"/>
</dbReference>
<dbReference type="InterPro" id="IPR002016">
    <property type="entry name" value="Haem_peroxidase"/>
</dbReference>
<dbReference type="InterPro" id="IPR010255">
    <property type="entry name" value="Haem_peroxidase_sf"/>
</dbReference>
<dbReference type="InterPro" id="IPR000823">
    <property type="entry name" value="Peroxidase_pln"/>
</dbReference>
<dbReference type="InterPro" id="IPR019794">
    <property type="entry name" value="Peroxidases_AS"/>
</dbReference>
<dbReference type="InterPro" id="IPR019793">
    <property type="entry name" value="Peroxidases_heam-ligand_BS"/>
</dbReference>
<dbReference type="InterPro" id="IPR033905">
    <property type="entry name" value="Secretory_peroxidase"/>
</dbReference>
<dbReference type="PANTHER" id="PTHR31388:SF24">
    <property type="entry name" value="PEROXIDASE 52"/>
    <property type="match status" value="1"/>
</dbReference>
<dbReference type="PANTHER" id="PTHR31388">
    <property type="entry name" value="PEROXIDASE 72-RELATED"/>
    <property type="match status" value="1"/>
</dbReference>
<dbReference type="Pfam" id="PF00141">
    <property type="entry name" value="peroxidase"/>
    <property type="match status" value="1"/>
</dbReference>
<dbReference type="PRINTS" id="PR00458">
    <property type="entry name" value="PEROXIDASE"/>
</dbReference>
<dbReference type="PRINTS" id="PR00461">
    <property type="entry name" value="PLPEROXIDASE"/>
</dbReference>
<dbReference type="SUPFAM" id="SSF48113">
    <property type="entry name" value="Heme-dependent peroxidases"/>
    <property type="match status" value="1"/>
</dbReference>
<dbReference type="PROSITE" id="PS00435">
    <property type="entry name" value="PEROXIDASE_1"/>
    <property type="match status" value="1"/>
</dbReference>
<dbReference type="PROSITE" id="PS00436">
    <property type="entry name" value="PEROXIDASE_2"/>
    <property type="match status" value="1"/>
</dbReference>
<dbReference type="PROSITE" id="PS50873">
    <property type="entry name" value="PEROXIDASE_4"/>
    <property type="match status" value="1"/>
</dbReference>
<keyword id="KW-0106">Calcium</keyword>
<keyword id="KW-0903">Direct protein sequencing</keyword>
<keyword id="KW-1015">Disulfide bond</keyword>
<keyword id="KW-0325">Glycoprotein</keyword>
<keyword id="KW-0349">Heme</keyword>
<keyword id="KW-0376">Hydrogen peroxide</keyword>
<keyword id="KW-0408">Iron</keyword>
<keyword id="KW-0479">Metal-binding</keyword>
<keyword id="KW-0560">Oxidoreductase</keyword>
<keyword id="KW-0575">Peroxidase</keyword>
<keyword id="KW-0873">Pyrrolidone carboxylic acid</keyword>
<evidence type="ECO:0000255" key="1">
    <source>
        <dbReference type="PROSITE-ProRule" id="PRU00297"/>
    </source>
</evidence>
<evidence type="ECO:0000255" key="2">
    <source>
        <dbReference type="PROSITE-ProRule" id="PRU10012"/>
    </source>
</evidence>
<evidence type="ECO:0000269" key="3">
    <source>
    </source>
</evidence>
<sequence>QLTTNFYSTSCPNLLSTVKSGVKSAVSSQPRMGASILRLFFHDCFVNGCDGSILLDDTSSFTGEQNAGPNRNSARGFTVINDIKSAVEKACPGVVSCADILAIAARDSVVQLGGPNWNVKVGRRDAKTASQAAANSNIPAPSMSLSQLISSFSAVGLSTRDMVALSGAHTIGQSRCVNFRARVYNETNINAAFATLRQRSCPRAAGSGDANLAPLDINSATSFDNSYFKNLMAQRGLLHSDQVLFNGGSTDSIVRGYSNSPSSFNSDFAAAMIKMGDISPLTGSSGEIRKVCGKTN</sequence>
<feature type="chain" id="PRO_0000055605" description="Peroxidase P7">
    <location>
        <begin position="1"/>
        <end position="296"/>
    </location>
</feature>
<feature type="active site" description="Proton acceptor" evidence="1 2">
    <location>
        <position position="42"/>
    </location>
</feature>
<feature type="binding site" evidence="1">
    <location>
        <position position="43"/>
    </location>
    <ligand>
        <name>Ca(2+)</name>
        <dbReference type="ChEBI" id="CHEBI:29108"/>
        <label>1</label>
    </ligand>
</feature>
<feature type="binding site" evidence="1">
    <location>
        <position position="46"/>
    </location>
    <ligand>
        <name>Ca(2+)</name>
        <dbReference type="ChEBI" id="CHEBI:29108"/>
        <label>1</label>
    </ligand>
</feature>
<feature type="binding site" evidence="1">
    <location>
        <position position="48"/>
    </location>
    <ligand>
        <name>Ca(2+)</name>
        <dbReference type="ChEBI" id="CHEBI:29108"/>
        <label>1</label>
    </ligand>
</feature>
<feature type="binding site" evidence="1">
    <location>
        <position position="50"/>
    </location>
    <ligand>
        <name>Ca(2+)</name>
        <dbReference type="ChEBI" id="CHEBI:29108"/>
        <label>1</label>
    </ligand>
</feature>
<feature type="binding site" evidence="1">
    <location>
        <position position="52"/>
    </location>
    <ligand>
        <name>Ca(2+)</name>
        <dbReference type="ChEBI" id="CHEBI:29108"/>
        <label>1</label>
    </ligand>
</feature>
<feature type="binding site" evidence="1">
    <location>
        <position position="139"/>
    </location>
    <ligand>
        <name>substrate</name>
    </ligand>
</feature>
<feature type="binding site" description="axial binding residue" evidence="1">
    <location>
        <position position="169"/>
    </location>
    <ligand>
        <name>heme b</name>
        <dbReference type="ChEBI" id="CHEBI:60344"/>
    </ligand>
    <ligandPart>
        <name>Fe</name>
        <dbReference type="ChEBI" id="CHEBI:18248"/>
    </ligandPart>
</feature>
<feature type="binding site" evidence="1">
    <location>
        <position position="170"/>
    </location>
    <ligand>
        <name>Ca(2+)</name>
        <dbReference type="ChEBI" id="CHEBI:29108"/>
        <label>2</label>
    </ligand>
</feature>
<feature type="binding site" evidence="1">
    <location>
        <position position="216"/>
    </location>
    <ligand>
        <name>Ca(2+)</name>
        <dbReference type="ChEBI" id="CHEBI:29108"/>
        <label>2</label>
    </ligand>
</feature>
<feature type="binding site" evidence="1">
    <location>
        <position position="219"/>
    </location>
    <ligand>
        <name>Ca(2+)</name>
        <dbReference type="ChEBI" id="CHEBI:29108"/>
        <label>2</label>
    </ligand>
</feature>
<feature type="binding site" evidence="1">
    <location>
        <position position="224"/>
    </location>
    <ligand>
        <name>Ca(2+)</name>
        <dbReference type="ChEBI" id="CHEBI:29108"/>
        <label>2</label>
    </ligand>
</feature>
<feature type="site" description="Transition state stabilizer" evidence="1">
    <location>
        <position position="38"/>
    </location>
</feature>
<feature type="modified residue" description="Pyrrolidone carboxylic acid" evidence="1 3">
    <location>
        <position position="1"/>
    </location>
</feature>
<feature type="glycosylation site" description="N-linked (GlcNAc...) asparagine">
    <location>
        <position position="185"/>
    </location>
</feature>
<feature type="disulfide bond" evidence="1 3">
    <location>
        <begin position="11"/>
        <end position="91"/>
    </location>
</feature>
<feature type="disulfide bond" evidence="1 3">
    <location>
        <begin position="44"/>
        <end position="49"/>
    </location>
</feature>
<feature type="disulfide bond">
    <location>
        <begin position="97"/>
        <end position="292"/>
    </location>
</feature>
<feature type="disulfide bond">
    <location>
        <begin position="176"/>
        <end position="201"/>
    </location>
</feature>
<protein>
    <recommendedName>
        <fullName>Peroxidase P7</fullName>
        <ecNumber>1.11.1.7</ecNumber>
    </recommendedName>
    <alternativeName>
        <fullName>TP7</fullName>
    </alternativeName>
</protein>
<name>PERP7_BRARR</name>
<organism>
    <name type="scientific">Brassica rapa subsp. rapa</name>
    <name type="common">Turnip</name>
    <dbReference type="NCBI Taxonomy" id="51350"/>
    <lineage>
        <taxon>Eukaryota</taxon>
        <taxon>Viridiplantae</taxon>
        <taxon>Streptophyta</taxon>
        <taxon>Embryophyta</taxon>
        <taxon>Tracheophyta</taxon>
        <taxon>Spermatophyta</taxon>
        <taxon>Magnoliopsida</taxon>
        <taxon>eudicotyledons</taxon>
        <taxon>Gunneridae</taxon>
        <taxon>Pentapetalae</taxon>
        <taxon>rosids</taxon>
        <taxon>malvids</taxon>
        <taxon>Brassicales</taxon>
        <taxon>Brassicaceae</taxon>
        <taxon>Brassiceae</taxon>
        <taxon>Brassica</taxon>
    </lineage>
</organism>
<comment type="function">
    <text>Removal of H(2)O(2), oxidation of toxic reductants, biosynthesis and degradation of lignin, suberization, auxin catabolism, response to environmental stresses such as wounding, pathogen attack and oxidative stress. These functions might be dependent on each isozyme/isoform in each plant tissue.</text>
</comment>
<comment type="catalytic activity">
    <reaction>
        <text>2 a phenolic donor + H2O2 = 2 a phenolic radical donor + 2 H2O</text>
        <dbReference type="Rhea" id="RHEA:56136"/>
        <dbReference type="ChEBI" id="CHEBI:15377"/>
        <dbReference type="ChEBI" id="CHEBI:16240"/>
        <dbReference type="ChEBI" id="CHEBI:139520"/>
        <dbReference type="ChEBI" id="CHEBI:139521"/>
        <dbReference type="EC" id="1.11.1.7"/>
    </reaction>
</comment>
<comment type="cofactor">
    <cofactor>
        <name>Ca(2+)</name>
        <dbReference type="ChEBI" id="CHEBI:29108"/>
    </cofactor>
    <text>Binds 2 calcium ions per subunit.</text>
</comment>
<comment type="cofactor">
    <cofactor>
        <name>heme b</name>
        <dbReference type="ChEBI" id="CHEBI:60344"/>
    </cofactor>
    <text>Binds 1 heme b (iron(II)-protoporphyrin IX) group per subunit.</text>
</comment>
<comment type="miscellaneous">
    <text>The protein shown, TP7, is the principal isoperoxidase during winter in turnip.</text>
</comment>
<comment type="similarity">
    <text evidence="1">Belongs to the peroxidase family. Classical plant (class III) peroxidase subfamily.</text>
</comment>
<reference key="1">
    <citation type="journal article" date="1980" name="Eur. J. Biochem.">
        <title>Covalent structure of turnip peroxidase 7. Cyanogen bromide fragments, complete structure and comparison to horseradish peroxidase C.</title>
        <authorList>
            <person name="Mazza G."/>
            <person name="Welinder K.G."/>
        </authorList>
    </citation>
    <scope>PROTEIN SEQUENCE</scope>
    <scope>PYROGLUTAMATE FORMATION AT GLN-1</scope>
    <source>
        <strain>cv. Blanc dur d'hiver</strain>
    </source>
</reference>
<reference key="2">
    <citation type="journal article" date="1977" name="Eur. J. Biochem.">
        <title>Amino-acid sequences of heme-linked, histidine-containing peptides of five peroxidases from horseradish and turnip.</title>
        <authorList>
            <person name="Welinder K.G."/>
            <person name="Mazza G."/>
        </authorList>
    </citation>
    <scope>PROTEIN SEQUENCE OF 32-65 AND 161-175</scope>
</reference>
<proteinExistence type="evidence at protein level"/>
<accession>P00434</accession>